<keyword id="KW-0012">Acyltransferase</keyword>
<keyword id="KW-0093">Biotin biosynthesis</keyword>
<keyword id="KW-0663">Pyridoxal phosphate</keyword>
<keyword id="KW-1185">Reference proteome</keyword>
<keyword id="KW-0808">Transferase</keyword>
<sequence>MKAPIEVSPLAWLDAVEQQRRAAGLRRSLRPRPPVATELDLASNDYLGLSQHPDVIDGGVAALRMWGAGATGSRLVTGDTELHQQFESELADYVGAASGLLFSSGYAANLGAVVGLSGRGALVVSDAYSHASLVDACRLSRARVVVTPHRDVDAVRAALQDRDEERAVVITESVFSTDGALAPLRELHEVCRRHRALLIVDEAHGLGVRGGGRGLVFEAGLAGAPDVVMTTTLSKALGSQGGAVLGPAAVRAHLIDAARTFIFDTGLAPAAVGAARAALGVLRAEPWRSGAVLRHAGVLAEVCRVREAPQSAVVSVILGDPDVAVAAATACLDGGVRVGCFRPPTVPAGTSRLRLTARASLDDAELEVARRVLTDVLAGLG</sequence>
<reference key="1">
    <citation type="journal article" date="2005" name="Proc. Natl. Acad. Sci. U.S.A.">
        <title>The complete genome sequence of Mycobacterium avium subspecies paratuberculosis.</title>
        <authorList>
            <person name="Li L."/>
            <person name="Bannantine J.P."/>
            <person name="Zhang Q."/>
            <person name="Amonsin A."/>
            <person name="May B.J."/>
            <person name="Alt D."/>
            <person name="Banerji N."/>
            <person name="Kanjilal S."/>
            <person name="Kapur V."/>
        </authorList>
    </citation>
    <scope>NUCLEOTIDE SEQUENCE [LARGE SCALE GENOMIC DNA]</scope>
    <source>
        <strain>ATCC BAA-968 / K-10</strain>
    </source>
</reference>
<dbReference type="EC" id="2.3.1.47"/>
<dbReference type="EMBL" id="AE016958">
    <property type="protein sequence ID" value="AAS03592.1"/>
    <property type="molecule type" value="Genomic_DNA"/>
</dbReference>
<dbReference type="RefSeq" id="WP_003877716.1">
    <property type="nucleotide sequence ID" value="NC_002944.2"/>
</dbReference>
<dbReference type="SMR" id="Q740R7"/>
<dbReference type="STRING" id="262316.MAP_1275"/>
<dbReference type="KEGG" id="mpa:MAP_1275"/>
<dbReference type="PATRIC" id="fig|262316.17.peg.1342"/>
<dbReference type="eggNOG" id="COG0156">
    <property type="taxonomic scope" value="Bacteria"/>
</dbReference>
<dbReference type="HOGENOM" id="CLU_015846_11_2_11"/>
<dbReference type="UniPathway" id="UPA00078"/>
<dbReference type="Proteomes" id="UP000000580">
    <property type="component" value="Chromosome"/>
</dbReference>
<dbReference type="GO" id="GO:0008710">
    <property type="term" value="F:8-amino-7-oxononanoate synthase activity"/>
    <property type="evidence" value="ECO:0007669"/>
    <property type="project" value="UniProtKB-EC"/>
</dbReference>
<dbReference type="GO" id="GO:0030170">
    <property type="term" value="F:pyridoxal phosphate binding"/>
    <property type="evidence" value="ECO:0007669"/>
    <property type="project" value="InterPro"/>
</dbReference>
<dbReference type="GO" id="GO:0009102">
    <property type="term" value="P:biotin biosynthetic process"/>
    <property type="evidence" value="ECO:0007669"/>
    <property type="project" value="UniProtKB-UniPathway"/>
</dbReference>
<dbReference type="Gene3D" id="3.90.1150.10">
    <property type="entry name" value="Aspartate Aminotransferase, domain 1"/>
    <property type="match status" value="1"/>
</dbReference>
<dbReference type="Gene3D" id="3.40.640.10">
    <property type="entry name" value="Type I PLP-dependent aspartate aminotransferase-like (Major domain)"/>
    <property type="match status" value="1"/>
</dbReference>
<dbReference type="InterPro" id="IPR001917">
    <property type="entry name" value="Aminotrans_II_pyridoxalP_BS"/>
</dbReference>
<dbReference type="InterPro" id="IPR004839">
    <property type="entry name" value="Aminotransferase_I/II_large"/>
</dbReference>
<dbReference type="InterPro" id="IPR050087">
    <property type="entry name" value="AON_synthase_class-II"/>
</dbReference>
<dbReference type="InterPro" id="IPR015424">
    <property type="entry name" value="PyrdxlP-dep_Trfase"/>
</dbReference>
<dbReference type="InterPro" id="IPR015421">
    <property type="entry name" value="PyrdxlP-dep_Trfase_major"/>
</dbReference>
<dbReference type="InterPro" id="IPR015422">
    <property type="entry name" value="PyrdxlP-dep_Trfase_small"/>
</dbReference>
<dbReference type="PANTHER" id="PTHR13693:SF100">
    <property type="entry name" value="8-AMINO-7-OXONONANOATE SYNTHASE"/>
    <property type="match status" value="1"/>
</dbReference>
<dbReference type="PANTHER" id="PTHR13693">
    <property type="entry name" value="CLASS II AMINOTRANSFERASE/8-AMINO-7-OXONONANOATE SYNTHASE"/>
    <property type="match status" value="1"/>
</dbReference>
<dbReference type="Pfam" id="PF00155">
    <property type="entry name" value="Aminotran_1_2"/>
    <property type="match status" value="1"/>
</dbReference>
<dbReference type="SUPFAM" id="SSF53383">
    <property type="entry name" value="PLP-dependent transferases"/>
    <property type="match status" value="1"/>
</dbReference>
<dbReference type="PROSITE" id="PS00599">
    <property type="entry name" value="AA_TRANSFER_CLASS_2"/>
    <property type="match status" value="1"/>
</dbReference>
<name>BIOF_MYCPA</name>
<protein>
    <recommendedName>
        <fullName>8-amino-7-oxononanoate synthase</fullName>
        <shortName>AONS</shortName>
        <ecNumber>2.3.1.47</ecNumber>
    </recommendedName>
    <alternativeName>
        <fullName>7-keto-8-amino-pelargonic acid synthase</fullName>
        <shortName>7-KAP synthase</shortName>
        <shortName>KAPA synthase</shortName>
    </alternativeName>
    <alternativeName>
        <fullName>8-amino-7-ketopelargonate synthase</fullName>
    </alternativeName>
    <alternativeName>
        <fullName>Alpha-oxoamine synthase</fullName>
    </alternativeName>
</protein>
<feature type="chain" id="PRO_0000381038" description="8-amino-7-oxononanoate synthase">
    <location>
        <begin position="1"/>
        <end position="381"/>
    </location>
</feature>
<feature type="binding site" evidence="1">
    <location>
        <position position="27"/>
    </location>
    <ligand>
        <name>substrate</name>
    </ligand>
</feature>
<feature type="binding site" evidence="1">
    <location>
        <begin position="105"/>
        <end position="106"/>
    </location>
    <ligand>
        <name>pyridoxal 5'-phosphate</name>
        <dbReference type="ChEBI" id="CHEBI:597326"/>
    </ligand>
</feature>
<feature type="binding site" evidence="1">
    <location>
        <position position="130"/>
    </location>
    <ligand>
        <name>substrate</name>
    </ligand>
</feature>
<feature type="binding site" evidence="1">
    <location>
        <position position="176"/>
    </location>
    <ligand>
        <name>pyridoxal 5'-phosphate</name>
        <dbReference type="ChEBI" id="CHEBI:597326"/>
    </ligand>
</feature>
<feature type="binding site" evidence="1">
    <location>
        <begin position="201"/>
        <end position="204"/>
    </location>
    <ligand>
        <name>pyridoxal 5'-phosphate</name>
        <dbReference type="ChEBI" id="CHEBI:597326"/>
    </ligand>
</feature>
<feature type="binding site" evidence="1">
    <location>
        <begin position="232"/>
        <end position="235"/>
    </location>
    <ligand>
        <name>pyridoxal 5'-phosphate</name>
        <dbReference type="ChEBI" id="CHEBI:597326"/>
    </ligand>
</feature>
<feature type="binding site" evidence="1">
    <location>
        <position position="345"/>
    </location>
    <ligand>
        <name>substrate</name>
    </ligand>
</feature>
<feature type="modified residue" description="N6-(pyridoxal phosphate)lysine" evidence="1">
    <location>
        <position position="235"/>
    </location>
</feature>
<organism>
    <name type="scientific">Mycolicibacterium paratuberculosis (strain ATCC BAA-968 / K-10)</name>
    <name type="common">Mycobacterium paratuberculosis</name>
    <dbReference type="NCBI Taxonomy" id="262316"/>
    <lineage>
        <taxon>Bacteria</taxon>
        <taxon>Bacillati</taxon>
        <taxon>Actinomycetota</taxon>
        <taxon>Actinomycetes</taxon>
        <taxon>Mycobacteriales</taxon>
        <taxon>Mycobacteriaceae</taxon>
        <taxon>Mycobacterium</taxon>
        <taxon>Mycobacterium avium complex (MAC)</taxon>
    </lineage>
</organism>
<gene>
    <name type="ordered locus">MAP_1275</name>
</gene>
<evidence type="ECO:0000250" key="1"/>
<evidence type="ECO:0000305" key="2"/>
<comment type="function">
    <text evidence="1">Catalyzes the decarboxylative condensation of pimeloyl-[acyl-carrier protein] and L-alanine to produce 8-amino-7-oxononanoate (AON), [acyl-carrier protein], and carbon dioxide.</text>
</comment>
<comment type="catalytic activity">
    <reaction>
        <text>6-carboxyhexanoyl-[ACP] + L-alanine + H(+) = (8S)-8-amino-7-oxononanoate + holo-[ACP] + CO2</text>
        <dbReference type="Rhea" id="RHEA:42288"/>
        <dbReference type="Rhea" id="RHEA-COMP:9685"/>
        <dbReference type="Rhea" id="RHEA-COMP:9955"/>
        <dbReference type="ChEBI" id="CHEBI:15378"/>
        <dbReference type="ChEBI" id="CHEBI:16526"/>
        <dbReference type="ChEBI" id="CHEBI:57972"/>
        <dbReference type="ChEBI" id="CHEBI:64479"/>
        <dbReference type="ChEBI" id="CHEBI:78846"/>
        <dbReference type="ChEBI" id="CHEBI:149468"/>
        <dbReference type="EC" id="2.3.1.47"/>
    </reaction>
</comment>
<comment type="cofactor">
    <cofactor evidence="1">
        <name>pyridoxal 5'-phosphate</name>
        <dbReference type="ChEBI" id="CHEBI:597326"/>
    </cofactor>
</comment>
<comment type="pathway">
    <text>Cofactor biosynthesis; biotin biosynthesis.</text>
</comment>
<comment type="subunit">
    <text evidence="1">Homodimer.</text>
</comment>
<comment type="similarity">
    <text evidence="2">Belongs to the class-II pyridoxal-phosphate-dependent aminotransferase family. BioF subfamily.</text>
</comment>
<proteinExistence type="inferred from homology"/>
<accession>Q740R7</accession>